<reference key="1">
    <citation type="journal article" date="2002" name="Nature">
        <title>Genome sequence of the plant pathogen Ralstonia solanacearum.</title>
        <authorList>
            <person name="Salanoubat M."/>
            <person name="Genin S."/>
            <person name="Artiguenave F."/>
            <person name="Gouzy J."/>
            <person name="Mangenot S."/>
            <person name="Arlat M."/>
            <person name="Billault A."/>
            <person name="Brottier P."/>
            <person name="Camus J.-C."/>
            <person name="Cattolico L."/>
            <person name="Chandler M."/>
            <person name="Choisne N."/>
            <person name="Claudel-Renard C."/>
            <person name="Cunnac S."/>
            <person name="Demange N."/>
            <person name="Gaspin C."/>
            <person name="Lavie M."/>
            <person name="Moisan A."/>
            <person name="Robert C."/>
            <person name="Saurin W."/>
            <person name="Schiex T."/>
            <person name="Siguier P."/>
            <person name="Thebault P."/>
            <person name="Whalen M."/>
            <person name="Wincker P."/>
            <person name="Levy M."/>
            <person name="Weissenbach J."/>
            <person name="Boucher C.A."/>
        </authorList>
    </citation>
    <scope>NUCLEOTIDE SEQUENCE [LARGE SCALE GENOMIC DNA]</scope>
    <source>
        <strain>ATCC BAA-1114 / GMI1000</strain>
    </source>
</reference>
<keyword id="KW-0119">Carbohydrate metabolism</keyword>
<keyword id="KW-0320">Glycogen biosynthesis</keyword>
<keyword id="KW-0321">Glycogen metabolism</keyword>
<keyword id="KW-0328">Glycosyltransferase</keyword>
<keyword id="KW-0614">Plasmid</keyword>
<keyword id="KW-1185">Reference proteome</keyword>
<keyword id="KW-0808">Transferase</keyword>
<geneLocation type="plasmid">
    <name>megaplasmid Rsp</name>
</geneLocation>
<organism>
    <name type="scientific">Ralstonia nicotianae (strain ATCC BAA-1114 / GMI1000)</name>
    <name type="common">Ralstonia solanacearum</name>
    <dbReference type="NCBI Taxonomy" id="267608"/>
    <lineage>
        <taxon>Bacteria</taxon>
        <taxon>Pseudomonadati</taxon>
        <taxon>Pseudomonadota</taxon>
        <taxon>Betaproteobacteria</taxon>
        <taxon>Burkholderiales</taxon>
        <taxon>Burkholderiaceae</taxon>
        <taxon>Ralstonia</taxon>
        <taxon>Ralstonia solanacearum species complex</taxon>
    </lineage>
</organism>
<proteinExistence type="inferred from homology"/>
<evidence type="ECO:0000255" key="1">
    <source>
        <dbReference type="HAMAP-Rule" id="MF_00685"/>
    </source>
</evidence>
<evidence type="ECO:0000256" key="2">
    <source>
        <dbReference type="SAM" id="MobiDB-lite"/>
    </source>
</evidence>
<name>GLGB_RALN1</name>
<sequence>MTSVHDFATATRPATPSAAAQEPAPALPPGLDRNTLDALTHGRLGDPFAVLGPHRLETAEGERPHRVVRAFHPGARRVQAIDPRGQVMAELAPVGRTGLFHGRLPDDAPDADGHPGAYRLRVVWPAGAGHEAVQEAEDPYAFGLLLGDLDLHLIAEGRHWELARCLGAQAMRQDDVAGVRFAVWAPNARRVSVVGDFNQWDGRRHPMRLRHGTGVWELFVPAGLGAGPGSRYKFELVGADGHLLVKADPVARRTEAPPATASVVADPLPFRWSDAAWMETRAARQRPDAPIAIYEVHAGSWLRDVEDGGRSLDWDALGERLIPYVAGLGFTHVELLPVAEHPFGGSWGYQPLGLFAPSARFGPPEAFARFVERCHQAALGVIVDWVPAHFPSDPHGLARFDGTALYEHADPREGFHQDWNTLIYNFGRHEVRGFLIASALEWLEHFHIDGLRVDAVASMLYRDYSRPADAWVPNRYGGRENLEAVAFLQQMNAVVHARCPGAITIAEESTAWPGVTAAVEFNGLGFDYKWNMGWMHDTLHYMQRDPIYRQHHHDGLTFGLVYAFSERFILPLSHDEVVHGKGSLLGKMPGDDWQRLANLRAYLAFMWTHPGKKLLFMGGEFGQLGEWNHDAAPEWHLLDDPRHRGVQRLVHDLNALYRSEPALHARDCAPEGFSWVIGDDRANSVFAYLRLDTAGTPMLIVANMTPVPRDGYRIGVPDVDGAVRWREMLNTDSAVYGGTNLGNGGVVDVEDVESHGWRRSVVVRLPPLAVVVLKV</sequence>
<protein>
    <recommendedName>
        <fullName evidence="1">1,4-alpha-glucan branching enzyme GlgB</fullName>
        <ecNumber evidence="1">2.4.1.18</ecNumber>
    </recommendedName>
    <alternativeName>
        <fullName evidence="1">1,4-alpha-D-glucan:1,4-alpha-D-glucan 6-glucosyl-transferase</fullName>
    </alternativeName>
    <alternativeName>
        <fullName evidence="1">Alpha-(1-&gt;4)-glucan branching enzyme</fullName>
    </alternativeName>
    <alternativeName>
        <fullName evidence="1">Glycogen branching enzyme</fullName>
        <shortName evidence="1">BE</shortName>
    </alternativeName>
</protein>
<gene>
    <name evidence="1" type="primary">glgB</name>
    <name type="ordered locus">RSp0239</name>
    <name type="ORF">RS06097</name>
</gene>
<comment type="function">
    <text evidence="1">Catalyzes the formation of the alpha-1,6-glucosidic linkages in glycogen by scission of a 1,4-alpha-linked oligosaccharide from growing alpha-1,4-glucan chains and the subsequent attachment of the oligosaccharide to the alpha-1,6 position.</text>
</comment>
<comment type="catalytic activity">
    <reaction evidence="1">
        <text>Transfers a segment of a (1-&gt;4)-alpha-D-glucan chain to a primary hydroxy group in a similar glucan chain.</text>
        <dbReference type="EC" id="2.4.1.18"/>
    </reaction>
</comment>
<comment type="pathway">
    <text evidence="1">Glycan biosynthesis; glycogen biosynthesis.</text>
</comment>
<comment type="subunit">
    <text evidence="1">Monomer.</text>
</comment>
<comment type="similarity">
    <text evidence="1">Belongs to the glycosyl hydrolase 13 family. GlgB subfamily.</text>
</comment>
<dbReference type="EC" id="2.4.1.18" evidence="1"/>
<dbReference type="EMBL" id="AL646053">
    <property type="protein sequence ID" value="CAD17390.1"/>
    <property type="molecule type" value="Genomic_DNA"/>
</dbReference>
<dbReference type="RefSeq" id="WP_011003553.1">
    <property type="nucleotide sequence ID" value="NC_003296.1"/>
</dbReference>
<dbReference type="SMR" id="Q8XT76"/>
<dbReference type="STRING" id="267608.RSp0239"/>
<dbReference type="CAZy" id="CBM48">
    <property type="family name" value="Carbohydrate-Binding Module Family 48"/>
</dbReference>
<dbReference type="CAZy" id="GH13">
    <property type="family name" value="Glycoside Hydrolase Family 13"/>
</dbReference>
<dbReference type="EnsemblBacteria" id="CAD17390">
    <property type="protein sequence ID" value="CAD17390"/>
    <property type="gene ID" value="RSp0239"/>
</dbReference>
<dbReference type="KEGG" id="rso:RSp0239"/>
<dbReference type="PATRIC" id="fig|267608.8.peg.3708"/>
<dbReference type="eggNOG" id="COG0296">
    <property type="taxonomic scope" value="Bacteria"/>
</dbReference>
<dbReference type="HOGENOM" id="CLU_004245_3_2_4"/>
<dbReference type="UniPathway" id="UPA00164"/>
<dbReference type="Proteomes" id="UP000001436">
    <property type="component" value="Plasmid megaplasmid Rsp"/>
</dbReference>
<dbReference type="GO" id="GO:0005829">
    <property type="term" value="C:cytosol"/>
    <property type="evidence" value="ECO:0007669"/>
    <property type="project" value="TreeGrafter"/>
</dbReference>
<dbReference type="GO" id="GO:0003844">
    <property type="term" value="F:1,4-alpha-glucan branching enzyme activity"/>
    <property type="evidence" value="ECO:0007669"/>
    <property type="project" value="UniProtKB-UniRule"/>
</dbReference>
<dbReference type="GO" id="GO:0043169">
    <property type="term" value="F:cation binding"/>
    <property type="evidence" value="ECO:0007669"/>
    <property type="project" value="InterPro"/>
</dbReference>
<dbReference type="GO" id="GO:0004553">
    <property type="term" value="F:hydrolase activity, hydrolyzing O-glycosyl compounds"/>
    <property type="evidence" value="ECO:0007669"/>
    <property type="project" value="InterPro"/>
</dbReference>
<dbReference type="GO" id="GO:0005978">
    <property type="term" value="P:glycogen biosynthetic process"/>
    <property type="evidence" value="ECO:0007669"/>
    <property type="project" value="UniProtKB-UniRule"/>
</dbReference>
<dbReference type="CDD" id="cd11322">
    <property type="entry name" value="AmyAc_Glg_BE"/>
    <property type="match status" value="1"/>
</dbReference>
<dbReference type="CDD" id="cd02855">
    <property type="entry name" value="E_set_GBE_prok_N"/>
    <property type="match status" value="1"/>
</dbReference>
<dbReference type="FunFam" id="2.60.40.10:FF:000169">
    <property type="entry name" value="1,4-alpha-glucan branching enzyme GlgB"/>
    <property type="match status" value="1"/>
</dbReference>
<dbReference type="FunFam" id="2.60.40.1180:FF:000002">
    <property type="entry name" value="1,4-alpha-glucan branching enzyme GlgB"/>
    <property type="match status" value="1"/>
</dbReference>
<dbReference type="FunFam" id="3.20.20.80:FF:000003">
    <property type="entry name" value="1,4-alpha-glucan branching enzyme GlgB"/>
    <property type="match status" value="1"/>
</dbReference>
<dbReference type="Gene3D" id="3.20.20.80">
    <property type="entry name" value="Glycosidases"/>
    <property type="match status" value="1"/>
</dbReference>
<dbReference type="Gene3D" id="2.60.40.1180">
    <property type="entry name" value="Golgi alpha-mannosidase II"/>
    <property type="match status" value="1"/>
</dbReference>
<dbReference type="Gene3D" id="2.60.40.10">
    <property type="entry name" value="Immunoglobulins"/>
    <property type="match status" value="1"/>
</dbReference>
<dbReference type="HAMAP" id="MF_00685">
    <property type="entry name" value="GlgB"/>
    <property type="match status" value="1"/>
</dbReference>
<dbReference type="InterPro" id="IPR006048">
    <property type="entry name" value="A-amylase/branching_C"/>
</dbReference>
<dbReference type="InterPro" id="IPR037439">
    <property type="entry name" value="Branching_enzy"/>
</dbReference>
<dbReference type="InterPro" id="IPR006407">
    <property type="entry name" value="GlgB"/>
</dbReference>
<dbReference type="InterPro" id="IPR054169">
    <property type="entry name" value="GlgB_N"/>
</dbReference>
<dbReference type="InterPro" id="IPR044143">
    <property type="entry name" value="GlgB_N_E_set_prok"/>
</dbReference>
<dbReference type="InterPro" id="IPR006047">
    <property type="entry name" value="Glyco_hydro_13_cat_dom"/>
</dbReference>
<dbReference type="InterPro" id="IPR004193">
    <property type="entry name" value="Glyco_hydro_13_N"/>
</dbReference>
<dbReference type="InterPro" id="IPR013780">
    <property type="entry name" value="Glyco_hydro_b"/>
</dbReference>
<dbReference type="InterPro" id="IPR017853">
    <property type="entry name" value="Glycoside_hydrolase_SF"/>
</dbReference>
<dbReference type="InterPro" id="IPR013783">
    <property type="entry name" value="Ig-like_fold"/>
</dbReference>
<dbReference type="InterPro" id="IPR014756">
    <property type="entry name" value="Ig_E-set"/>
</dbReference>
<dbReference type="NCBIfam" id="TIGR01515">
    <property type="entry name" value="branching_enzym"/>
    <property type="match status" value="1"/>
</dbReference>
<dbReference type="NCBIfam" id="NF003811">
    <property type="entry name" value="PRK05402.1"/>
    <property type="match status" value="1"/>
</dbReference>
<dbReference type="NCBIfam" id="NF008967">
    <property type="entry name" value="PRK12313.1"/>
    <property type="match status" value="1"/>
</dbReference>
<dbReference type="PANTHER" id="PTHR43651">
    <property type="entry name" value="1,4-ALPHA-GLUCAN-BRANCHING ENZYME"/>
    <property type="match status" value="1"/>
</dbReference>
<dbReference type="PANTHER" id="PTHR43651:SF3">
    <property type="entry name" value="1,4-ALPHA-GLUCAN-BRANCHING ENZYME"/>
    <property type="match status" value="1"/>
</dbReference>
<dbReference type="Pfam" id="PF00128">
    <property type="entry name" value="Alpha-amylase"/>
    <property type="match status" value="1"/>
</dbReference>
<dbReference type="Pfam" id="PF02806">
    <property type="entry name" value="Alpha-amylase_C"/>
    <property type="match status" value="1"/>
</dbReference>
<dbReference type="Pfam" id="PF02922">
    <property type="entry name" value="CBM_48"/>
    <property type="match status" value="1"/>
</dbReference>
<dbReference type="Pfam" id="PF22019">
    <property type="entry name" value="GlgB_N"/>
    <property type="match status" value="1"/>
</dbReference>
<dbReference type="PIRSF" id="PIRSF000463">
    <property type="entry name" value="GlgB"/>
    <property type="match status" value="1"/>
</dbReference>
<dbReference type="SMART" id="SM00642">
    <property type="entry name" value="Aamy"/>
    <property type="match status" value="1"/>
</dbReference>
<dbReference type="SUPFAM" id="SSF51445">
    <property type="entry name" value="(Trans)glycosidases"/>
    <property type="match status" value="1"/>
</dbReference>
<dbReference type="SUPFAM" id="SSF81296">
    <property type="entry name" value="E set domains"/>
    <property type="match status" value="2"/>
</dbReference>
<dbReference type="SUPFAM" id="SSF51011">
    <property type="entry name" value="Glycosyl hydrolase domain"/>
    <property type="match status" value="1"/>
</dbReference>
<accession>Q8XT76</accession>
<feature type="chain" id="PRO_0000188733" description="1,4-alpha-glucan branching enzyme GlgB">
    <location>
        <begin position="1"/>
        <end position="775"/>
    </location>
</feature>
<feature type="region of interest" description="Disordered" evidence="2">
    <location>
        <begin position="1"/>
        <end position="39"/>
    </location>
</feature>
<feature type="compositionally biased region" description="Low complexity" evidence="2">
    <location>
        <begin position="8"/>
        <end position="24"/>
    </location>
</feature>
<feature type="active site" description="Nucleophile" evidence="1">
    <location>
        <position position="454"/>
    </location>
</feature>
<feature type="active site" description="Proton donor" evidence="1">
    <location>
        <position position="507"/>
    </location>
</feature>